<keyword id="KW-0002">3D-structure</keyword>
<keyword id="KW-0044">Antibiotic</keyword>
<keyword id="KW-0929">Antimicrobial</keyword>
<keyword id="KW-0903">Direct protein sequencing</keyword>
<keyword id="KW-1015">Disulfide bond</keyword>
<keyword id="KW-0238">DNA-binding</keyword>
<keyword id="KW-0732">Signal</keyword>
<gene>
    <name type="primary">ncsA</name>
</gene>
<comment type="function">
    <text>NCS has antibiotic activity (for Gram-positive bacteria) and antitumor activity (for certain mouse tumors). NCS binds non-covalently to a chromophore which is the cytotoxic and mutagenic component of the antibiotic. The chromophore binds to DNA as a weak intercalator and causes single- and double-strand breaks.</text>
</comment>
<comment type="similarity">
    <text evidence="4">Belongs to the neocarzinostatin family.</text>
</comment>
<reference key="1">
    <citation type="journal article" date="1993" name="Biol. Pharm. Bull.">
        <title>The amino acid sequence of neocarzinostatin apoprotein deduced from the base sequence of the gene.</title>
        <authorList>
            <person name="Sakata N."/>
            <person name="Minamitani S."/>
            <person name="Kanbe T."/>
            <person name="Hori M."/>
            <person name="Hamada M."/>
            <person name="Edo K."/>
        </authorList>
    </citation>
    <scope>NUCLEOTIDE SEQUENCE [GENOMIC DNA]</scope>
    <source>
        <strain>ATCC 15944 / E-793 / F-51</strain>
    </source>
</reference>
<reference key="2">
    <citation type="journal article" date="1986" name="Arch. Biochem. Biophys.">
        <title>Reexamination of the primary structure of an antitumor protein, neocarzinostatin.</title>
        <authorList>
            <person name="Kuromizu K."/>
            <person name="Tsunasawa S."/>
            <person name="Maeda H."/>
            <person name="Abe O."/>
            <person name="Sakiyama F."/>
        </authorList>
    </citation>
    <scope>PROTEIN SEQUENCE OF 35-147</scope>
</reference>
<reference key="3">
    <citation type="journal article" date="1984" name="J. Biol. Chem.">
        <title>A revised primary structure for neocarzinostatin based on fast atom bombardment and gas chromatographic-mass spectrometry.</title>
        <authorList>
            <person name="Gibson B.W."/>
            <person name="Herlihy W.C."/>
            <person name="Samy T.S.A."/>
            <person name="Hahm K.-S."/>
            <person name="Maeda H."/>
            <person name="Meienhofer J."/>
            <person name="Biemann K."/>
        </authorList>
    </citation>
    <scope>PRELIMINARY PROTEIN SEQUENCE OF 35-147</scope>
</reference>
<reference key="4">
    <citation type="journal article" date="1991" name="Biochemistry">
        <title>Two- and three-dimensional proton NMR studies of apo-neocarzinostatin.</title>
        <authorList>
            <person name="Gao X."/>
            <person name="Burkhart W."/>
        </authorList>
    </citation>
    <scope>STRUCTURE BY NMR</scope>
    <scope>PROTEIN SEQUENCE OF 35-147</scope>
</reference>
<reference key="5">
    <citation type="journal article" date="1993" name="Eur. J. Biochem.">
        <title>Crystal structure of apo-neocarzinostatin at 0.15-nm resolution.</title>
        <authorList>
            <person name="Teplyakov A."/>
            <person name="Obmolova G."/>
            <person name="Wilson K."/>
            <person name="Kuromizu K."/>
        </authorList>
    </citation>
    <scope>X-RAY CRYSTALLOGRAPHY (1.5 ANGSTROMS)</scope>
</reference>
<reference key="6">
    <citation type="journal article" date="1993" name="Science">
        <title>Crystal structure of neocarzinostatin, an antitumor protein-chromophore complex.</title>
        <authorList>
            <person name="Kim K.-H."/>
            <person name="Kwon B.-M."/>
            <person name="Myers A.G."/>
            <person name="Rees D.C."/>
        </authorList>
    </citation>
    <scope>X-RAY CRYSTALLOGRAPHY (1.8 ANGSTROMS)</scope>
</reference>
<reference key="7">
    <citation type="journal article" date="1992" name="J. Mol. Biol.">
        <title>Three-dimensional solution structure of apo-neocarzinostatin.</title>
        <authorList>
            <person name="Gao X."/>
        </authorList>
    </citation>
    <scope>STRUCTURE BY NMR</scope>
</reference>
<reference key="8">
    <citation type="journal article" date="1990" name="Eur. J. Biochem.">
        <title>Proton NMR studies of apo-neocarzinostatin from Streptomyces carzinostaticus. Sequence-specific assignment and secondary structure.</title>
        <authorList>
            <person name="Adjadj E."/>
            <person name="Mispelter J."/>
            <person name="Quiniou E."/>
            <person name="Dimicoli J.-L."/>
            <person name="Favaudon V."/>
            <person name="Lhoste J.-M."/>
        </authorList>
    </citation>
    <scope>STRUCTURE BY NMR</scope>
</reference>
<reference key="9">
    <citation type="journal article" date="1992" name="Eur. J. Biochem.">
        <title>Three-dimensional solution structure of apo-neocarzinostatin from Streptomyces carzinostaticus determined by NMR spectroscopy.</title>
        <authorList>
            <person name="Adjadj E."/>
            <person name="Quiniou E."/>
            <person name="Mispelter J."/>
            <person name="Favaudon V."/>
            <person name="Lhoste J.-M."/>
        </authorList>
    </citation>
    <scope>STRUCTURE BY NMR</scope>
</reference>
<reference key="10">
    <citation type="journal article" date="1990" name="Biochemistry">
        <title>Sequential 1H NMR assignments and secondary structure of aponeocarzinostatin in solution.</title>
        <authorList>
            <person name="Remerowski M.L."/>
            <person name="Glaser S.J."/>
            <person name="Sieker L.C."/>
            <person name="Samy T.S.A."/>
            <person name="Drobny G.P."/>
        </authorList>
    </citation>
    <scope>STRUCTURE BY NMR</scope>
</reference>
<reference key="11">
    <citation type="journal article" date="1991" name="J. Biochem.">
        <title>Neocarzinostatin: interaction between the antitumor-active chromophore and the carrier protein.</title>
        <authorList>
            <person name="Takashima H."/>
            <person name="Amiya S."/>
            <person name="Kobayashi Y."/>
        </authorList>
    </citation>
    <scope>STRUCTURE BY NMR</scope>
</reference>
<reference key="12">
    <citation type="journal article" date="1991" name="Arch. Biochem. Biophys.">
        <title>Location of the disulfide bonds in the antitumor protein neocarzinostatin.</title>
        <authorList>
            <person name="Kuromizu K."/>
            <person name="Abe O."/>
            <person name="Maeda H."/>
        </authorList>
    </citation>
    <scope>DISULFIDE BONDS</scope>
</reference>
<sequence>MVPISIIRNRVAKVAVGSAAVLGLAVGFQTPAVAAAPTATVTPSSGLSDGTVVKVAGAGLQAGTAYDVGQCAWVDTGVLACNPADFSSVTADANGSASTSLTVRRSFEGFLFDGTRWGTVDCTTAACQVGLSDAAGNGPEGVAISFN</sequence>
<accession>P0A3R9</accession>
<accession>P01550</accession>
<organism>
    <name type="scientific">Streptomyces carzinostaticus</name>
    <dbReference type="NCBI Taxonomy" id="1897"/>
    <lineage>
        <taxon>Bacteria</taxon>
        <taxon>Bacillati</taxon>
        <taxon>Actinomycetota</taxon>
        <taxon>Actinomycetes</taxon>
        <taxon>Kitasatosporales</taxon>
        <taxon>Streptomycetaceae</taxon>
        <taxon>Streptomyces</taxon>
    </lineage>
</organism>
<feature type="signal peptide" evidence="1 3">
    <location>
        <begin position="1"/>
        <end position="34"/>
    </location>
</feature>
<feature type="chain" id="PRO_0000019461" description="Neocarzinostatin">
    <location>
        <begin position="35"/>
        <end position="147"/>
    </location>
</feature>
<feature type="disulfide bond" evidence="2">
    <location>
        <begin position="71"/>
        <end position="81"/>
    </location>
</feature>
<feature type="disulfide bond" evidence="2">
    <location>
        <begin position="122"/>
        <end position="127"/>
    </location>
</feature>
<feature type="sequence conflict" description="In Ref. 2; AA sequence." evidence="4" ref="2">
    <original>N</original>
    <variation>D</variation>
    <location>
        <position position="94"/>
    </location>
</feature>
<feature type="strand" evidence="7">
    <location>
        <begin position="38"/>
        <end position="43"/>
    </location>
</feature>
<feature type="strand" evidence="8">
    <location>
        <begin position="45"/>
        <end position="47"/>
    </location>
</feature>
<feature type="strand" evidence="7">
    <location>
        <begin position="52"/>
        <end position="59"/>
    </location>
</feature>
<feature type="strand" evidence="6">
    <location>
        <begin position="60"/>
        <end position="63"/>
    </location>
</feature>
<feature type="strand" evidence="7">
    <location>
        <begin position="65"/>
        <end position="75"/>
    </location>
</feature>
<feature type="strand" evidence="7">
    <location>
        <begin position="78"/>
        <end position="81"/>
    </location>
</feature>
<feature type="helix" evidence="7">
    <location>
        <begin position="83"/>
        <end position="85"/>
    </location>
</feature>
<feature type="strand" evidence="7">
    <location>
        <begin position="87"/>
        <end position="90"/>
    </location>
</feature>
<feature type="turn" evidence="5">
    <location>
        <begin position="93"/>
        <end position="95"/>
    </location>
</feature>
<feature type="strand" evidence="7">
    <location>
        <begin position="97"/>
        <end position="102"/>
    </location>
</feature>
<feature type="strand" evidence="7">
    <location>
        <begin position="105"/>
        <end position="110"/>
    </location>
</feature>
<feature type="strand" evidence="5">
    <location>
        <begin position="112"/>
        <end position="114"/>
    </location>
</feature>
<feature type="strand" evidence="7">
    <location>
        <begin position="116"/>
        <end position="121"/>
    </location>
</feature>
<feature type="turn" evidence="8">
    <location>
        <begin position="122"/>
        <end position="124"/>
    </location>
</feature>
<feature type="strand" evidence="7">
    <location>
        <begin position="127"/>
        <end position="132"/>
    </location>
</feature>
<feature type="strand" evidence="6">
    <location>
        <begin position="134"/>
        <end position="136"/>
    </location>
</feature>
<feature type="strand" evidence="6">
    <location>
        <begin position="142"/>
        <end position="145"/>
    </location>
</feature>
<proteinExistence type="evidence at protein level"/>
<dbReference type="EMBL" id="D10996">
    <property type="protein sequence ID" value="BAA01764.1"/>
    <property type="molecule type" value="Genomic_DNA"/>
</dbReference>
<dbReference type="EMBL" id="S65575">
    <property type="protein sequence ID" value="AAB28103.1"/>
    <property type="molecule type" value="Genomic_DNA"/>
</dbReference>
<dbReference type="PIR" id="JH0792">
    <property type="entry name" value="ZNSMCC"/>
</dbReference>
<dbReference type="PDB" id="1J5H">
    <property type="method" value="NMR"/>
    <property type="chains" value="A=35-147"/>
</dbReference>
<dbReference type="PDB" id="1J5I">
    <property type="method" value="NMR"/>
    <property type="chains" value="A=35-147"/>
</dbReference>
<dbReference type="PDB" id="1NCO">
    <property type="method" value="X-ray"/>
    <property type="resolution" value="1.80 A"/>
    <property type="chains" value="A/B=35-147"/>
</dbReference>
<dbReference type="PDB" id="1NOA">
    <property type="method" value="X-ray"/>
    <property type="resolution" value="1.50 A"/>
    <property type="chains" value="A=35-147"/>
</dbReference>
<dbReference type="PDB" id="1O5P">
    <property type="method" value="NMR"/>
    <property type="chains" value="A=35-147"/>
</dbReference>
<dbReference type="PDB" id="2CBM">
    <property type="method" value="X-ray"/>
    <property type="resolution" value="2.03 A"/>
    <property type="chains" value="A=35-146"/>
</dbReference>
<dbReference type="PDB" id="2CBO">
    <property type="method" value="X-ray"/>
    <property type="resolution" value="1.70 A"/>
    <property type="chains" value="A=35-147"/>
</dbReference>
<dbReference type="PDB" id="2CBQ">
    <property type="method" value="X-ray"/>
    <property type="resolution" value="2.60 A"/>
    <property type="chains" value="A/B/C/D/E/F=35-147"/>
</dbReference>
<dbReference type="PDB" id="2CBT">
    <property type="method" value="X-ray"/>
    <property type="resolution" value="2.20 A"/>
    <property type="chains" value="A/B=35-146"/>
</dbReference>
<dbReference type="PDB" id="2G0K">
    <property type="method" value="NMR"/>
    <property type="chains" value="A=35-147"/>
</dbReference>
<dbReference type="PDB" id="2G0L">
    <property type="method" value="NMR"/>
    <property type="chains" value="A=35-147"/>
</dbReference>
<dbReference type="PDBsum" id="1J5H"/>
<dbReference type="PDBsum" id="1J5I"/>
<dbReference type="PDBsum" id="1NCO"/>
<dbReference type="PDBsum" id="1NOA"/>
<dbReference type="PDBsum" id="1O5P"/>
<dbReference type="PDBsum" id="2CBM"/>
<dbReference type="PDBsum" id="2CBO"/>
<dbReference type="PDBsum" id="2CBQ"/>
<dbReference type="PDBsum" id="2CBT"/>
<dbReference type="PDBsum" id="2G0K"/>
<dbReference type="PDBsum" id="2G0L"/>
<dbReference type="BMRB" id="P0A3R9"/>
<dbReference type="SMR" id="P0A3R9"/>
<dbReference type="DrugBank" id="DB08261">
    <property type="generic name" value="2-hydroxy-7-methoxy-5-methyl-naphthalene-1-carboxylic acid meso-2,5-dihydroxy-cyclopent-3-enyl ester"/>
</dbReference>
<dbReference type="DrugBank" id="DB07776">
    <property type="generic name" value="Flavone"/>
</dbReference>
<dbReference type="DrugBank" id="DB08619">
    <property type="generic name" value="Testosterone succinate"/>
</dbReference>
<dbReference type="EvolutionaryTrace" id="P0A3R9"/>
<dbReference type="GO" id="GO:0003677">
    <property type="term" value="F:DNA binding"/>
    <property type="evidence" value="ECO:0007669"/>
    <property type="project" value="UniProtKB-KW"/>
</dbReference>
<dbReference type="GO" id="GO:0042742">
    <property type="term" value="P:defense response to bacterium"/>
    <property type="evidence" value="ECO:0007669"/>
    <property type="project" value="UniProtKB-KW"/>
</dbReference>
<dbReference type="Gene3D" id="2.60.40.230">
    <property type="entry name" value="Neocarzinostatin-like"/>
    <property type="match status" value="1"/>
</dbReference>
<dbReference type="InterPro" id="IPR027273">
    <property type="entry name" value="Neocarzinostatin-like"/>
</dbReference>
<dbReference type="InterPro" id="IPR002186">
    <property type="entry name" value="Neocarzinostatin_fam"/>
</dbReference>
<dbReference type="NCBIfam" id="NF040680">
    <property type="entry name" value="chromo_anti"/>
    <property type="match status" value="1"/>
</dbReference>
<dbReference type="Pfam" id="PF00960">
    <property type="entry name" value="Neocarzinostat"/>
    <property type="match status" value="1"/>
</dbReference>
<dbReference type="PRINTS" id="PR01885">
    <property type="entry name" value="MACROMOMYCIN"/>
</dbReference>
<dbReference type="SUPFAM" id="SSF49319">
    <property type="entry name" value="Actinoxanthin-like"/>
    <property type="match status" value="1"/>
</dbReference>
<protein>
    <recommendedName>
        <fullName>Neocarzinostatin</fullName>
        <shortName>NCS</shortName>
    </recommendedName>
    <alternativeName>
        <fullName>Mitomalcin</fullName>
        <shortName>MMC</shortName>
    </alternativeName>
</protein>
<name>NCZS_STRCZ</name>
<evidence type="ECO:0000269" key="1">
    <source>
    </source>
</evidence>
<evidence type="ECO:0000269" key="2">
    <source>
    </source>
</evidence>
<evidence type="ECO:0000269" key="3">
    <source>
    </source>
</evidence>
<evidence type="ECO:0000305" key="4"/>
<evidence type="ECO:0007829" key="5">
    <source>
        <dbReference type="PDB" id="1J5H"/>
    </source>
</evidence>
<evidence type="ECO:0007829" key="6">
    <source>
        <dbReference type="PDB" id="1J5I"/>
    </source>
</evidence>
<evidence type="ECO:0007829" key="7">
    <source>
        <dbReference type="PDB" id="1NOA"/>
    </source>
</evidence>
<evidence type="ECO:0007829" key="8">
    <source>
        <dbReference type="PDB" id="2CBO"/>
    </source>
</evidence>